<protein>
    <recommendedName>
        <fullName evidence="4 5">Conotoxin Vi15a</fullName>
    </recommendedName>
    <alternativeName>
        <fullName evidence="4">Vi15.1</fullName>
    </alternativeName>
    <alternativeName>
        <fullName evidence="6">ViXVA</fullName>
    </alternativeName>
</protein>
<feature type="signal peptide" evidence="1">
    <location>
        <begin position="1"/>
        <end position="19"/>
    </location>
</feature>
<feature type="propeptide" id="PRO_0000392196">
    <location>
        <begin position="20"/>
        <end position="43"/>
    </location>
</feature>
<feature type="peptide" id="PRO_0000392197" description="Conotoxin Vi15a" evidence="2 3">
    <location>
        <begin position="46"/>
        <end position="72"/>
    </location>
</feature>
<feature type="modified residue" description="Tryptophan amide" evidence="2">
    <location>
        <position position="72"/>
    </location>
</feature>
<evidence type="ECO:0000255" key="1"/>
<evidence type="ECO:0000269" key="2">
    <source>
    </source>
</evidence>
<evidence type="ECO:0000269" key="3">
    <source>
    </source>
</evidence>
<evidence type="ECO:0000303" key="4">
    <source>
    </source>
</evidence>
<evidence type="ECO:0000303" key="5">
    <source>
    </source>
</evidence>
<evidence type="ECO:0000305" key="6"/>
<evidence type="ECO:0000305" key="7">
    <source>
    </source>
</evidence>
<evidence type="ECO:0000305" key="8">
    <source>
    </source>
</evidence>
<dbReference type="EMBL" id="EU169206">
    <property type="protein sequence ID" value="ABY26939.1"/>
    <property type="molecule type" value="mRNA"/>
</dbReference>
<dbReference type="SMR" id="B3FIA5"/>
<dbReference type="ConoServer" id="2786">
    <property type="toxin name" value="ViXVA precursor"/>
</dbReference>
<dbReference type="GO" id="GO:0005576">
    <property type="term" value="C:extracellular region"/>
    <property type="evidence" value="ECO:0007669"/>
    <property type="project" value="UniProtKB-SubCell"/>
</dbReference>
<dbReference type="GO" id="GO:0090729">
    <property type="term" value="F:toxin activity"/>
    <property type="evidence" value="ECO:0007669"/>
    <property type="project" value="UniProtKB-KW"/>
</dbReference>
<accession>B3FIA5</accession>
<comment type="subcellular location">
    <subcellularLocation>
        <location evidence="2 3">Secreted</location>
    </subcellularLocation>
</comment>
<comment type="tissue specificity">
    <text evidence="7 8">Expressed by the venom duct.</text>
</comment>
<comment type="domain">
    <text evidence="6">The cysteine framework is XV (C-C-CC-C-C-C-C).</text>
</comment>
<comment type="PTM">
    <text>Contains four disulfide bonds.</text>
</comment>
<comment type="mass spectrometry"/>
<comment type="similarity">
    <text evidence="6">Belongs to the conotoxin V superfamily.</text>
</comment>
<keyword id="KW-0027">Amidation</keyword>
<keyword id="KW-0165">Cleavage on pair of basic residues</keyword>
<keyword id="KW-0903">Direct protein sequencing</keyword>
<keyword id="KW-1015">Disulfide bond</keyword>
<keyword id="KW-0964">Secreted</keyword>
<keyword id="KW-0732">Signal</keyword>
<keyword id="KW-0800">Toxin</keyword>
<proteinExistence type="evidence at protein level"/>
<sequence>MMPVILLLLLSLAIRCADGKAVQGDSDPSASLLTGDKNHDLPVKRDCTTCAGEECCGRCTCPWGDNCSCIEWGK</sequence>
<organism>
    <name type="scientific">Conus virgo</name>
    <name type="common">Virgin cone</name>
    <dbReference type="NCBI Taxonomy" id="89427"/>
    <lineage>
        <taxon>Eukaryota</taxon>
        <taxon>Metazoa</taxon>
        <taxon>Spiralia</taxon>
        <taxon>Lophotrochozoa</taxon>
        <taxon>Mollusca</taxon>
        <taxon>Gastropoda</taxon>
        <taxon>Caenogastropoda</taxon>
        <taxon>Neogastropoda</taxon>
        <taxon>Conoidea</taxon>
        <taxon>Conidae</taxon>
        <taxon>Conus</taxon>
        <taxon>Virgiconus</taxon>
    </lineage>
</organism>
<reference key="1">
    <citation type="journal article" date="2008" name="Peptides">
        <title>Identification of a novel class of conotoxins defined as V-conotoxins with a unique cysteine pattern and signal peptide sequence.</title>
        <authorList>
            <person name="Peng C."/>
            <person name="Liu L."/>
            <person name="Shao X.X."/>
            <person name="Chi C.-W."/>
            <person name="Wang C.G."/>
        </authorList>
    </citation>
    <scope>NUCLEOTIDE SEQUENCE [MRNA]</scope>
    <scope>PROTEIN SEQUENCE OF 46-72</scope>
    <scope>AMIDATION AT TRP-72</scope>
    <scope>MASS SPECTROMETRY</scope>
    <source>
        <tissue>Venom</tissue>
        <tissue>Venom duct</tissue>
    </source>
</reference>
<reference key="2">
    <citation type="journal article" date="2022" name="Molecules">
        <title>Anti-ovarian cancer conotoxins identified from Conus venom.</title>
        <authorList>
            <person name="Ju S."/>
            <person name="Zhang Y."/>
            <person name="Guo X."/>
            <person name="Yan Q."/>
            <person name="Liu S."/>
            <person name="Ma B."/>
            <person name="Zhang M."/>
            <person name="Bao J."/>
            <person name="Luo S."/>
            <person name="Fu Y."/>
        </authorList>
    </citation>
    <scope>PROTEIN SEQUENCE OF 46-72</scope>
    <scope>IDENTIFICATION BY MASS SPECTROMETRY</scope>
    <scope>SUBCELLULAR LOCATION</scope>
    <scope>AMIDATION AT TRP-72</scope>
    <source>
        <tissue>Venom</tissue>
    </source>
</reference>
<name>CVFA_CONVR</name>